<evidence type="ECO:0000255" key="1">
    <source>
        <dbReference type="HAMAP-Rule" id="MF_00280"/>
    </source>
</evidence>
<evidence type="ECO:0000256" key="2">
    <source>
        <dbReference type="SAM" id="MobiDB-lite"/>
    </source>
</evidence>
<evidence type="ECO:0000269" key="3">
    <source>
    </source>
</evidence>
<evidence type="ECO:0000305" key="4"/>
<keyword id="KW-0687">Ribonucleoprotein</keyword>
<keyword id="KW-0689">Ribosomal protein</keyword>
<keyword id="KW-0694">RNA-binding</keyword>
<keyword id="KW-0699">rRNA-binding</keyword>
<feature type="chain" id="PRO_1000006786" description="Large ribosomal subunit protein uL10">
    <location>
        <begin position="1"/>
        <end position="346"/>
    </location>
</feature>
<feature type="region of interest" description="Disordered" evidence="2">
    <location>
        <begin position="307"/>
        <end position="346"/>
    </location>
</feature>
<feature type="compositionally biased region" description="Acidic residues" evidence="2">
    <location>
        <begin position="321"/>
        <end position="337"/>
    </location>
</feature>
<sequence>MEEEKHHTEHVPEWKKDEIENIMELIQSHKVFGMVGIEGILATKIQKIRRDLKDVAVLKVSRNSLTERALNQLGESIPEMNKYLDKQTALVFTNESPFKLYKVLEQTKTPSPIKGGAIAPADIIVQKGPTSFPPGPILGELQSAGIPASIDAGKVAVKETKVVCKAGEVVSQKLATMLTKLEIYPLIVGLDLRAVYDNGAIYEPELLAIDESQYFSDITRAAQSAFNLAVNTAYPTSATIGTLLAKAFAESKNLGVNAVVFDSGVMDALLAKAHVQMTSVASEAADKDANAVDDQLREVLGAAASAAAAVAKEPEKKEEVKEEEEEEEEEDHSEEDGMAGLGSLFG</sequence>
<organism>
    <name type="scientific">Methanosarcina barkeri (strain Fusaro / DSM 804)</name>
    <dbReference type="NCBI Taxonomy" id="269797"/>
    <lineage>
        <taxon>Archaea</taxon>
        <taxon>Methanobacteriati</taxon>
        <taxon>Methanobacteriota</taxon>
        <taxon>Stenosarchaea group</taxon>
        <taxon>Methanomicrobia</taxon>
        <taxon>Methanosarcinales</taxon>
        <taxon>Methanosarcinaceae</taxon>
        <taxon>Methanosarcina</taxon>
    </lineage>
</organism>
<accession>Q46EU9</accession>
<name>RL10_METBF</name>
<proteinExistence type="evidence at protein level"/>
<dbReference type="EMBL" id="CP000099">
    <property type="protein sequence ID" value="AAZ69593.1"/>
    <property type="molecule type" value="Genomic_DNA"/>
</dbReference>
<dbReference type="SMR" id="Q46EU9"/>
<dbReference type="STRING" id="269797.Mbar_A0613"/>
<dbReference type="PaxDb" id="269797-Mbar_A0613"/>
<dbReference type="KEGG" id="mba:Mbar_A0613"/>
<dbReference type="eggNOG" id="arCOG04288">
    <property type="taxonomic scope" value="Archaea"/>
</dbReference>
<dbReference type="HOGENOM" id="CLU_053173_0_0_2"/>
<dbReference type="OrthoDB" id="30930at2157"/>
<dbReference type="GO" id="GO:0022625">
    <property type="term" value="C:cytosolic large ribosomal subunit"/>
    <property type="evidence" value="ECO:0007669"/>
    <property type="project" value="TreeGrafter"/>
</dbReference>
<dbReference type="GO" id="GO:0070180">
    <property type="term" value="F:large ribosomal subunit rRNA binding"/>
    <property type="evidence" value="ECO:0007669"/>
    <property type="project" value="UniProtKB-UniRule"/>
</dbReference>
<dbReference type="GO" id="GO:0003735">
    <property type="term" value="F:structural constituent of ribosome"/>
    <property type="evidence" value="ECO:0007669"/>
    <property type="project" value="TreeGrafter"/>
</dbReference>
<dbReference type="GO" id="GO:0002181">
    <property type="term" value="P:cytoplasmic translation"/>
    <property type="evidence" value="ECO:0007669"/>
    <property type="project" value="TreeGrafter"/>
</dbReference>
<dbReference type="GO" id="GO:0000027">
    <property type="term" value="P:ribosomal large subunit assembly"/>
    <property type="evidence" value="ECO:0007669"/>
    <property type="project" value="TreeGrafter"/>
</dbReference>
<dbReference type="CDD" id="cd05795">
    <property type="entry name" value="Ribosomal_P0_L10e"/>
    <property type="match status" value="1"/>
</dbReference>
<dbReference type="Gene3D" id="3.30.70.1730">
    <property type="match status" value="1"/>
</dbReference>
<dbReference type="Gene3D" id="3.90.105.20">
    <property type="match status" value="1"/>
</dbReference>
<dbReference type="Gene3D" id="6.10.140.760">
    <property type="match status" value="1"/>
</dbReference>
<dbReference type="HAMAP" id="MF_00280">
    <property type="entry name" value="Ribosomal_uL10_arch"/>
    <property type="match status" value="1"/>
</dbReference>
<dbReference type="InterPro" id="IPR050323">
    <property type="entry name" value="Ribosomal_protein_uL10"/>
</dbReference>
<dbReference type="InterPro" id="IPR001790">
    <property type="entry name" value="Ribosomal_uL10"/>
</dbReference>
<dbReference type="InterPro" id="IPR040637">
    <property type="entry name" value="Ribosomal_uL10-like_insert"/>
</dbReference>
<dbReference type="InterPro" id="IPR043164">
    <property type="entry name" value="Ribosomal_uL10-like_insert_sf"/>
</dbReference>
<dbReference type="InterPro" id="IPR043141">
    <property type="entry name" value="Ribosomal_uL10-like_sf"/>
</dbReference>
<dbReference type="InterPro" id="IPR022909">
    <property type="entry name" value="Ribosomal_uL10_arc"/>
</dbReference>
<dbReference type="NCBIfam" id="NF003098">
    <property type="entry name" value="PRK04019.1-5"/>
    <property type="match status" value="1"/>
</dbReference>
<dbReference type="PANTHER" id="PTHR45699">
    <property type="entry name" value="60S ACIDIC RIBOSOMAL PROTEIN P0"/>
    <property type="match status" value="1"/>
</dbReference>
<dbReference type="PANTHER" id="PTHR45699:SF3">
    <property type="entry name" value="LARGE RIBOSOMAL SUBUNIT PROTEIN UL10"/>
    <property type="match status" value="1"/>
</dbReference>
<dbReference type="Pfam" id="PF00466">
    <property type="entry name" value="Ribosomal_L10"/>
    <property type="match status" value="1"/>
</dbReference>
<dbReference type="Pfam" id="PF17777">
    <property type="entry name" value="RL10P_insert"/>
    <property type="match status" value="1"/>
</dbReference>
<dbReference type="SUPFAM" id="SSF160369">
    <property type="entry name" value="Ribosomal protein L10-like"/>
    <property type="match status" value="1"/>
</dbReference>
<reference key="1">
    <citation type="journal article" date="2006" name="J. Bacteriol.">
        <title>The Methanosarcina barkeri genome: comparative analysis with Methanosarcina acetivorans and Methanosarcina mazei reveals extensive rearrangement within methanosarcinal genomes.</title>
        <authorList>
            <person name="Maeder D.L."/>
            <person name="Anderson I."/>
            <person name="Brettin T.S."/>
            <person name="Bruce D.C."/>
            <person name="Gilna P."/>
            <person name="Han C.S."/>
            <person name="Lapidus A."/>
            <person name="Metcalf W.W."/>
            <person name="Saunders E."/>
            <person name="Tapia R."/>
            <person name="Sowers K.R."/>
        </authorList>
    </citation>
    <scope>NUCLEOTIDE SEQUENCE [LARGE SCALE GENOMIC DNA]</scope>
    <source>
        <strain>Fusaro / DSM 804</strain>
    </source>
</reference>
<reference key="2">
    <citation type="journal article" date="2010" name="Mol. Cell. Proteomics">
        <title>Mass spectrometry defines the stoichiometry of ribosomal stalk complexes across the phylogenetic tree.</title>
        <authorList>
            <person name="Gordiyenko Y."/>
            <person name="Videler H."/>
            <person name="Zhou M."/>
            <person name="McKay A.R."/>
            <person name="Fucini P."/>
            <person name="Biegel E."/>
            <person name="Muller V."/>
            <person name="Robinson C.V."/>
        </authorList>
    </citation>
    <scope>SUBUNIT</scope>
    <scope>STOICHIOMETRY</scope>
    <scope>MASS SPECTROMETRY</scope>
</reference>
<gene>
    <name evidence="1" type="primary">rpl10</name>
    <name evidence="1" type="synonym">rplP0</name>
    <name type="ordered locus">Mbar_A0613</name>
</gene>
<protein>
    <recommendedName>
        <fullName evidence="1">Large ribosomal subunit protein uL10</fullName>
    </recommendedName>
    <alternativeName>
        <fullName evidence="4">50S ribosomal protein L10</fullName>
    </alternativeName>
    <alternativeName>
        <fullName evidence="1">Acidic ribosomal protein P0 homolog</fullName>
    </alternativeName>
</protein>
<comment type="function">
    <text evidence="1">Forms part of the ribosomal stalk, playing a central role in the interaction of the ribosome with GTP-bound translation factors.</text>
</comment>
<comment type="subunit">
    <text evidence="3">Part of the 50S ribosomal subunit. Forms part of the ribosomal stalk which helps the ribosome interact with GTP-bound translation factors. Forms both a pentameric L10(L12)2(L12)2 and heptameric L10(L12)2(L12)2(L12)2 complex, where L10 forms an elongated spine to which the L12 dimers bind in a sequential fashion. The proportion of heptameric complexes increases during cell growth.</text>
</comment>
<comment type="mass spectrometry">
    <text>Isolated L10(L12)6.</text>
</comment>
<comment type="mass spectrometry">
    <text>Isolated L10(L12)4.</text>
</comment>
<comment type="similarity">
    <text evidence="1">Belongs to the universal ribosomal protein uL10 family.</text>
</comment>